<sequence length="356" mass="36613">MQTLHALLRDIPAPDAEAMARAQQHIDGLLKPPGSLGRLETLAVQLAGMPGLNGTPQVGEKAVLVMCADHGVWDEGVAVSPKIVTAIQAANMTRGTTGVCVLAAQAGAKVHVIDVGIDAEPIPGVVNMRVARGCGNIAVGPAMSRLQAEALLLEVSRYTCDLAQRGVTLFGVGELGMANTTPAAAMVSVFTGSDAKEVVGIGANLPPSRIDNKVDVVRRAIAINQPNPRDGIDVLSKVGGFDLVGMTGVMLGAARCGLPVLLDGFLSYSAALAACQIAPAVRPYLIPSHFSAEKGARIALAHLSMEPYLHMAMRLGEGSGAALAMPIVEAACAMFHNMGELAASNIVLPEGNANAT</sequence>
<organism>
    <name type="scientific">Salmonella paratyphi B (strain ATCC BAA-1250 / SPB7)</name>
    <dbReference type="NCBI Taxonomy" id="1016998"/>
    <lineage>
        <taxon>Bacteria</taxon>
        <taxon>Pseudomonadati</taxon>
        <taxon>Pseudomonadota</taxon>
        <taxon>Gammaproteobacteria</taxon>
        <taxon>Enterobacterales</taxon>
        <taxon>Enterobacteriaceae</taxon>
        <taxon>Salmonella</taxon>
    </lineage>
</organism>
<dbReference type="EC" id="2.4.2.21" evidence="1"/>
<dbReference type="EMBL" id="CP000886">
    <property type="protein sequence ID" value="ABX66510.1"/>
    <property type="molecule type" value="Genomic_DNA"/>
</dbReference>
<dbReference type="RefSeq" id="WP_001193983.1">
    <property type="nucleotide sequence ID" value="NC_010102.1"/>
</dbReference>
<dbReference type="SMR" id="A9MTA4"/>
<dbReference type="KEGG" id="spq:SPAB_01089"/>
<dbReference type="PATRIC" id="fig|1016998.12.peg.1030"/>
<dbReference type="HOGENOM" id="CLU_002982_0_0_6"/>
<dbReference type="BioCyc" id="SENT1016998:SPAB_RS04565-MONOMER"/>
<dbReference type="UniPathway" id="UPA00061">
    <property type="reaction ID" value="UER00516"/>
</dbReference>
<dbReference type="Proteomes" id="UP000008556">
    <property type="component" value="Chromosome"/>
</dbReference>
<dbReference type="GO" id="GO:0008939">
    <property type="term" value="F:nicotinate-nucleotide-dimethylbenzimidazole phosphoribosyltransferase activity"/>
    <property type="evidence" value="ECO:0007669"/>
    <property type="project" value="UniProtKB-UniRule"/>
</dbReference>
<dbReference type="GO" id="GO:0009236">
    <property type="term" value="P:cobalamin biosynthetic process"/>
    <property type="evidence" value="ECO:0007669"/>
    <property type="project" value="UniProtKB-KW"/>
</dbReference>
<dbReference type="CDD" id="cd02439">
    <property type="entry name" value="DMB-PRT_CobT"/>
    <property type="match status" value="1"/>
</dbReference>
<dbReference type="FunFam" id="1.10.1610.10:FF:000001">
    <property type="entry name" value="Nicotinate-nucleotide--dimethylbenzimidazole phosphoribosyltransferase"/>
    <property type="match status" value="1"/>
</dbReference>
<dbReference type="FunFam" id="3.40.50.10210:FF:000001">
    <property type="entry name" value="Nicotinate-nucleotide--dimethylbenzimidazole phosphoribosyltransferase"/>
    <property type="match status" value="1"/>
</dbReference>
<dbReference type="Gene3D" id="1.10.1610.10">
    <property type="match status" value="1"/>
</dbReference>
<dbReference type="Gene3D" id="3.40.50.10210">
    <property type="match status" value="1"/>
</dbReference>
<dbReference type="HAMAP" id="MF_00230">
    <property type="entry name" value="CobT"/>
    <property type="match status" value="1"/>
</dbReference>
<dbReference type="InterPro" id="IPR003200">
    <property type="entry name" value="Nict_dMeBzImd_PRibTrfase"/>
</dbReference>
<dbReference type="InterPro" id="IPR017846">
    <property type="entry name" value="Nict_dMeBzImd_PRibTrfase_bact"/>
</dbReference>
<dbReference type="InterPro" id="IPR023195">
    <property type="entry name" value="Nict_dMeBzImd_PRibTrfase_N"/>
</dbReference>
<dbReference type="InterPro" id="IPR036087">
    <property type="entry name" value="Nict_dMeBzImd_PRibTrfase_sf"/>
</dbReference>
<dbReference type="NCBIfam" id="TIGR03160">
    <property type="entry name" value="cobT_DBIPRT"/>
    <property type="match status" value="1"/>
</dbReference>
<dbReference type="NCBIfam" id="NF000996">
    <property type="entry name" value="PRK00105.1"/>
    <property type="match status" value="1"/>
</dbReference>
<dbReference type="PANTHER" id="PTHR43463">
    <property type="entry name" value="NICOTINATE-NUCLEOTIDE--DIMETHYLBENZIMIDAZOLE PHOSPHORIBOSYLTRANSFERASE"/>
    <property type="match status" value="1"/>
</dbReference>
<dbReference type="PANTHER" id="PTHR43463:SF1">
    <property type="entry name" value="NICOTINATE-NUCLEOTIDE--DIMETHYLBENZIMIDAZOLE PHOSPHORIBOSYLTRANSFERASE"/>
    <property type="match status" value="1"/>
</dbReference>
<dbReference type="Pfam" id="PF02277">
    <property type="entry name" value="DBI_PRT"/>
    <property type="match status" value="1"/>
</dbReference>
<dbReference type="SUPFAM" id="SSF52733">
    <property type="entry name" value="Nicotinate mononucleotide:5,6-dimethylbenzimidazole phosphoribosyltransferase (CobT)"/>
    <property type="match status" value="1"/>
</dbReference>
<comment type="function">
    <text evidence="1">Catalyzes the synthesis of alpha-ribazole-5'-phosphate from nicotinate mononucleotide (NAMN) and 5,6-dimethylbenzimidazole (DMB).</text>
</comment>
<comment type="catalytic activity">
    <reaction evidence="1">
        <text>5,6-dimethylbenzimidazole + nicotinate beta-D-ribonucleotide = alpha-ribazole 5'-phosphate + nicotinate + H(+)</text>
        <dbReference type="Rhea" id="RHEA:11196"/>
        <dbReference type="ChEBI" id="CHEBI:15378"/>
        <dbReference type="ChEBI" id="CHEBI:15890"/>
        <dbReference type="ChEBI" id="CHEBI:32544"/>
        <dbReference type="ChEBI" id="CHEBI:57502"/>
        <dbReference type="ChEBI" id="CHEBI:57918"/>
        <dbReference type="EC" id="2.4.2.21"/>
    </reaction>
</comment>
<comment type="pathway">
    <text evidence="1">Nucleoside biosynthesis; alpha-ribazole biosynthesis; alpha-ribazole from 5,6-dimethylbenzimidazole: step 1/2.</text>
</comment>
<comment type="subunit">
    <text evidence="1">Homodimer.</text>
</comment>
<comment type="similarity">
    <text evidence="1">Belongs to the CobT family.</text>
</comment>
<evidence type="ECO:0000255" key="1">
    <source>
        <dbReference type="HAMAP-Rule" id="MF_00230"/>
    </source>
</evidence>
<protein>
    <recommendedName>
        <fullName evidence="1">Nicotinate-nucleotide--dimethylbenzimidazole phosphoribosyltransferase</fullName>
        <shortName evidence="1">NN:DBI PRT</shortName>
        <ecNumber evidence="1">2.4.2.21</ecNumber>
    </recommendedName>
    <alternativeName>
        <fullName evidence="1">N(1)-alpha-phosphoribosyltransferase</fullName>
    </alternativeName>
</protein>
<name>COBT_SALPB</name>
<accession>A9MTA4</accession>
<reference key="1">
    <citation type="submission" date="2007-11" db="EMBL/GenBank/DDBJ databases">
        <authorList>
            <consortium name="The Salmonella enterica serovar Paratyphi B Genome Sequencing Project"/>
            <person name="McClelland M."/>
            <person name="Sanderson E.K."/>
            <person name="Porwollik S."/>
            <person name="Spieth J."/>
            <person name="Clifton W.S."/>
            <person name="Fulton R."/>
            <person name="Cordes M."/>
            <person name="Wollam A."/>
            <person name="Shah N."/>
            <person name="Pepin K."/>
            <person name="Bhonagiri V."/>
            <person name="Nash W."/>
            <person name="Johnson M."/>
            <person name="Thiruvilangam P."/>
            <person name="Wilson R."/>
        </authorList>
    </citation>
    <scope>NUCLEOTIDE SEQUENCE [LARGE SCALE GENOMIC DNA]</scope>
    <source>
        <strain>ATCC BAA-1250 / SPB7</strain>
    </source>
</reference>
<keyword id="KW-0169">Cobalamin biosynthesis</keyword>
<keyword id="KW-0328">Glycosyltransferase</keyword>
<keyword id="KW-0808">Transferase</keyword>
<proteinExistence type="inferred from homology"/>
<feature type="chain" id="PRO_1000078248" description="Nicotinate-nucleotide--dimethylbenzimidazole phosphoribosyltransferase">
    <location>
        <begin position="1"/>
        <end position="356"/>
    </location>
</feature>
<feature type="active site" description="Proton acceptor" evidence="1">
    <location>
        <position position="317"/>
    </location>
</feature>
<gene>
    <name evidence="1" type="primary">cobT</name>
    <name type="ordered locus">SPAB_01089</name>
</gene>